<feature type="chain" id="PRO_0000098023" description="Urease subunit gamma">
    <location>
        <begin position="1"/>
        <end position="100"/>
    </location>
</feature>
<feature type="sequence conflict" description="In Ref. 1; AAA25667." evidence="6" ref="1">
    <original>A</original>
    <variation>R</variation>
    <location>
        <position position="35"/>
    </location>
</feature>
<comment type="catalytic activity">
    <reaction evidence="1 3 5">
        <text>urea + 2 H2O + H(+) = hydrogencarbonate + 2 NH4(+)</text>
        <dbReference type="Rhea" id="RHEA:20557"/>
        <dbReference type="ChEBI" id="CHEBI:15377"/>
        <dbReference type="ChEBI" id="CHEBI:15378"/>
        <dbReference type="ChEBI" id="CHEBI:16199"/>
        <dbReference type="ChEBI" id="CHEBI:17544"/>
        <dbReference type="ChEBI" id="CHEBI:28938"/>
        <dbReference type="EC" id="3.5.1.5"/>
    </reaction>
</comment>
<comment type="pathway">
    <text evidence="1">Nitrogen metabolism; urea degradation; CO(2) and NH(3) from urea (urease route): step 1/1.</text>
</comment>
<comment type="subunit">
    <text evidence="2">Probable heterotrimer of UreA (gamma), UreB (beta) and UreC (alpha) subunits. Three heterotrimers associate to form the active enzyme. The trimeric urease interacts with an accessory complex composed of UreD, UreF and UreG, which is required for the assembly of the nickel containing metallocenter of UreC. The UreE protein may also play a direct role in nickel transfer to the urease apoprotein.</text>
</comment>
<comment type="subcellular location">
    <subcellularLocation>
        <location evidence="1">Cytoplasm</location>
    </subcellularLocation>
</comment>
<comment type="induction">
    <text evidence="4">By urea.</text>
</comment>
<comment type="similarity">
    <text evidence="1">Belongs to the urease gamma subunit family.</text>
</comment>
<gene>
    <name evidence="1" type="primary">ureA</name>
    <name type="ordered locus">PMI3683</name>
</gene>
<reference key="1">
    <citation type="journal article" date="1989" name="J. Bacteriol.">
        <title>Proteus mirabilis urease: nucleotide sequence determination and comparison with jack bean urease.</title>
        <authorList>
            <person name="Jones B.D."/>
            <person name="Mobley H.L.T."/>
        </authorList>
    </citation>
    <scope>NUCLEOTIDE SEQUENCE [GENOMIC DNA]</scope>
</reference>
<reference key="2">
    <citation type="journal article" date="2008" name="J. Bacteriol.">
        <title>Complete genome sequence of uropathogenic Proteus mirabilis, a master of both adherence and motility.</title>
        <authorList>
            <person name="Pearson M.M."/>
            <person name="Sebaihia M."/>
            <person name="Churcher C."/>
            <person name="Quail M.A."/>
            <person name="Seshasayee A.S."/>
            <person name="Luscombe N.M."/>
            <person name="Abdellah Z."/>
            <person name="Arrosmith C."/>
            <person name="Atkin B."/>
            <person name="Chillingworth T."/>
            <person name="Hauser H."/>
            <person name="Jagels K."/>
            <person name="Moule S."/>
            <person name="Mungall K."/>
            <person name="Norbertczak H."/>
            <person name="Rabbinowitsch E."/>
            <person name="Walker D."/>
            <person name="Whithead S."/>
            <person name="Thomson N.R."/>
            <person name="Rather P.N."/>
            <person name="Parkhill J."/>
            <person name="Mobley H.L.T."/>
        </authorList>
    </citation>
    <scope>NUCLEOTIDE SEQUENCE [LARGE SCALE GENOMIC DNA]</scope>
    <source>
        <strain>HI4320</strain>
    </source>
</reference>
<reference key="3">
    <citation type="journal article" date="1990" name="Infect. Immun.">
        <title>Construction of a urease-negative mutant of Proteus mirabilis: analysis of virulence in a mouse model of ascending urinary tract infection.</title>
        <authorList>
            <person name="Jones B.D."/>
            <person name="Lockatell C.V."/>
            <person name="Johnson D.E."/>
            <person name="Warren J.W."/>
            <person name="Mobley H.L.T."/>
        </authorList>
    </citation>
    <scope>UREASE AS A VIRULENCE FACTOR</scope>
</reference>
<reference key="4">
    <citation type="journal article" date="1993" name="Infect. Immun.">
        <title>Proteus mirabilis urease: histidine 320 of UreC is essential for urea hydrolysis and nickel ion binding within the native enzyme.</title>
        <authorList>
            <person name="Sriwanthana B."/>
            <person name="Mobley H.L.T."/>
        </authorList>
    </citation>
    <scope>CATALYTIC ACTIVITY</scope>
</reference>
<reference key="5">
    <citation type="journal article" date="1993" name="J. Bacteriol.">
        <title>Proteus mirabilis urease: transcriptional regulation by UreR.</title>
        <authorList>
            <person name="Nicholson E.B."/>
            <person name="Concaugh E.A."/>
            <person name="Foxall P.A."/>
            <person name="Island M.D."/>
            <person name="Mobley H.L.T."/>
        </authorList>
    </citation>
    <scope>INDUCTION</scope>
</reference>
<reference key="6">
    <citation type="journal article" date="1995" name="J. Bacteriol.">
        <title>Proteus mirabilis urease: operon fusion and linker insertion analysis of ure gene organization, regulation, and function.</title>
        <authorList>
            <person name="Island M.D."/>
            <person name="Mobley H.L.T."/>
        </authorList>
    </citation>
    <scope>CATALYTIC ACTIVITY</scope>
</reference>
<reference key="7">
    <citation type="journal article" date="2001" name="J. Bacteriol.">
        <title>Interaction of Proteus mirabilis urease apoenzyme and accessory proteins identified with yeast two-hybrid technology.</title>
        <authorList>
            <person name="Heimer S.R."/>
            <person name="Mobley H.L.T."/>
        </authorList>
    </citation>
    <scope>INTERACTION WITH UREC</scope>
</reference>
<evidence type="ECO:0000255" key="1">
    <source>
        <dbReference type="HAMAP-Rule" id="MF_00739"/>
    </source>
</evidence>
<evidence type="ECO:0000269" key="2">
    <source>
    </source>
</evidence>
<evidence type="ECO:0000269" key="3">
    <source>
    </source>
</evidence>
<evidence type="ECO:0000269" key="4">
    <source>
    </source>
</evidence>
<evidence type="ECO:0000269" key="5">
    <source>
    </source>
</evidence>
<evidence type="ECO:0000305" key="6"/>
<proteinExistence type="evidence at protein level"/>
<dbReference type="EC" id="3.5.1.5" evidence="1"/>
<dbReference type="EMBL" id="M31834">
    <property type="protein sequence ID" value="AAA25667.1"/>
    <property type="molecule type" value="Genomic_DNA"/>
</dbReference>
<dbReference type="EMBL" id="AM942759">
    <property type="protein sequence ID" value="CAR47182.1"/>
    <property type="molecule type" value="Genomic_DNA"/>
</dbReference>
<dbReference type="PIR" id="B43719">
    <property type="entry name" value="B43719"/>
</dbReference>
<dbReference type="RefSeq" id="WP_004245265.1">
    <property type="nucleotide sequence ID" value="NC_010554.1"/>
</dbReference>
<dbReference type="SMR" id="P17088"/>
<dbReference type="EnsemblBacteria" id="CAR47182">
    <property type="protein sequence ID" value="CAR47182"/>
    <property type="gene ID" value="PMI3683"/>
</dbReference>
<dbReference type="GeneID" id="6802283"/>
<dbReference type="KEGG" id="pmr:PMI3683"/>
<dbReference type="eggNOG" id="COG0831">
    <property type="taxonomic scope" value="Bacteria"/>
</dbReference>
<dbReference type="HOGENOM" id="CLU_145825_1_0_6"/>
<dbReference type="UniPathway" id="UPA00258">
    <property type="reaction ID" value="UER00370"/>
</dbReference>
<dbReference type="Proteomes" id="UP000008319">
    <property type="component" value="Chromosome"/>
</dbReference>
<dbReference type="GO" id="GO:0005737">
    <property type="term" value="C:cytoplasm"/>
    <property type="evidence" value="ECO:0007669"/>
    <property type="project" value="UniProtKB-SubCell"/>
</dbReference>
<dbReference type="GO" id="GO:0016151">
    <property type="term" value="F:nickel cation binding"/>
    <property type="evidence" value="ECO:0007669"/>
    <property type="project" value="InterPro"/>
</dbReference>
<dbReference type="GO" id="GO:0009039">
    <property type="term" value="F:urease activity"/>
    <property type="evidence" value="ECO:0007669"/>
    <property type="project" value="UniProtKB-UniRule"/>
</dbReference>
<dbReference type="GO" id="GO:0043419">
    <property type="term" value="P:urea catabolic process"/>
    <property type="evidence" value="ECO:0007669"/>
    <property type="project" value="UniProtKB-UniRule"/>
</dbReference>
<dbReference type="CDD" id="cd00390">
    <property type="entry name" value="Urease_gamma"/>
    <property type="match status" value="1"/>
</dbReference>
<dbReference type="Gene3D" id="3.30.280.10">
    <property type="entry name" value="Urease, gamma-like subunit"/>
    <property type="match status" value="1"/>
</dbReference>
<dbReference type="HAMAP" id="MF_00739">
    <property type="entry name" value="Urease_gamma"/>
    <property type="match status" value="1"/>
</dbReference>
<dbReference type="InterPro" id="IPR012010">
    <property type="entry name" value="Urease_gamma"/>
</dbReference>
<dbReference type="InterPro" id="IPR002026">
    <property type="entry name" value="Urease_gamma/gamma-beta_su"/>
</dbReference>
<dbReference type="InterPro" id="IPR036463">
    <property type="entry name" value="Urease_gamma_sf"/>
</dbReference>
<dbReference type="InterPro" id="IPR050069">
    <property type="entry name" value="Urease_subunit"/>
</dbReference>
<dbReference type="NCBIfam" id="NF009712">
    <property type="entry name" value="PRK13241.1"/>
    <property type="match status" value="1"/>
</dbReference>
<dbReference type="NCBIfam" id="TIGR00193">
    <property type="entry name" value="urease_gam"/>
    <property type="match status" value="1"/>
</dbReference>
<dbReference type="PANTHER" id="PTHR33569">
    <property type="entry name" value="UREASE"/>
    <property type="match status" value="1"/>
</dbReference>
<dbReference type="PANTHER" id="PTHR33569:SF1">
    <property type="entry name" value="UREASE"/>
    <property type="match status" value="1"/>
</dbReference>
<dbReference type="Pfam" id="PF00547">
    <property type="entry name" value="Urease_gamma"/>
    <property type="match status" value="1"/>
</dbReference>
<dbReference type="PIRSF" id="PIRSF001223">
    <property type="entry name" value="Urease_gamma"/>
    <property type="match status" value="1"/>
</dbReference>
<dbReference type="SUPFAM" id="SSF54111">
    <property type="entry name" value="Urease, gamma-subunit"/>
    <property type="match status" value="1"/>
</dbReference>
<protein>
    <recommendedName>
        <fullName evidence="1">Urease subunit gamma</fullName>
        <ecNumber evidence="1">3.5.1.5</ecNumber>
    </recommendedName>
    <alternativeName>
        <fullName evidence="1">Urea amidohydrolase subunit gamma</fullName>
    </alternativeName>
</protein>
<name>URE3_PROMH</name>
<keyword id="KW-0963">Cytoplasm</keyword>
<keyword id="KW-0378">Hydrolase</keyword>
<keyword id="KW-1185">Reference proteome</keyword>
<keyword id="KW-0843">Virulence</keyword>
<sequence>MELTPREKDKLLLFTAGLVAERRLAKGLKLNYPEAVALISCAIMEGAREGKTVAQLMSEGRTVLTAEQVMEGVPEMIKDVQVECTFPDGTKLVSIHSPIV</sequence>
<organism>
    <name type="scientific">Proteus mirabilis (strain HI4320)</name>
    <dbReference type="NCBI Taxonomy" id="529507"/>
    <lineage>
        <taxon>Bacteria</taxon>
        <taxon>Pseudomonadati</taxon>
        <taxon>Pseudomonadota</taxon>
        <taxon>Gammaproteobacteria</taxon>
        <taxon>Enterobacterales</taxon>
        <taxon>Morganellaceae</taxon>
        <taxon>Proteus</taxon>
    </lineage>
</organism>
<accession>P17088</accession>
<accession>B4EXN3</accession>